<gene>
    <name evidence="1" type="primary">folD</name>
    <name type="ordered locus">Tgr7_0937</name>
</gene>
<name>FOLD_THISH</name>
<comment type="function">
    <text evidence="1">Catalyzes the oxidation of 5,10-methylenetetrahydrofolate to 5,10-methenyltetrahydrofolate and then the hydrolysis of 5,10-methenyltetrahydrofolate to 10-formyltetrahydrofolate.</text>
</comment>
<comment type="catalytic activity">
    <reaction evidence="1">
        <text>(6R)-5,10-methylene-5,6,7,8-tetrahydrofolate + NADP(+) = (6R)-5,10-methenyltetrahydrofolate + NADPH</text>
        <dbReference type="Rhea" id="RHEA:22812"/>
        <dbReference type="ChEBI" id="CHEBI:15636"/>
        <dbReference type="ChEBI" id="CHEBI:57455"/>
        <dbReference type="ChEBI" id="CHEBI:57783"/>
        <dbReference type="ChEBI" id="CHEBI:58349"/>
        <dbReference type="EC" id="1.5.1.5"/>
    </reaction>
</comment>
<comment type="catalytic activity">
    <reaction evidence="1">
        <text>(6R)-5,10-methenyltetrahydrofolate + H2O = (6R)-10-formyltetrahydrofolate + H(+)</text>
        <dbReference type="Rhea" id="RHEA:23700"/>
        <dbReference type="ChEBI" id="CHEBI:15377"/>
        <dbReference type="ChEBI" id="CHEBI:15378"/>
        <dbReference type="ChEBI" id="CHEBI:57455"/>
        <dbReference type="ChEBI" id="CHEBI:195366"/>
        <dbReference type="EC" id="3.5.4.9"/>
    </reaction>
</comment>
<comment type="pathway">
    <text evidence="1">One-carbon metabolism; tetrahydrofolate interconversion.</text>
</comment>
<comment type="subunit">
    <text evidence="1">Homodimer.</text>
</comment>
<comment type="similarity">
    <text evidence="1">Belongs to the tetrahydrofolate dehydrogenase/cyclohydrolase family.</text>
</comment>
<dbReference type="EC" id="1.5.1.5" evidence="1"/>
<dbReference type="EC" id="3.5.4.9" evidence="1"/>
<dbReference type="EMBL" id="CP001339">
    <property type="protein sequence ID" value="ACL72025.1"/>
    <property type="molecule type" value="Genomic_DNA"/>
</dbReference>
<dbReference type="RefSeq" id="WP_012637510.1">
    <property type="nucleotide sequence ID" value="NC_011901.1"/>
</dbReference>
<dbReference type="SMR" id="B8GNT6"/>
<dbReference type="STRING" id="396588.Tgr7_0937"/>
<dbReference type="KEGG" id="tgr:Tgr7_0937"/>
<dbReference type="eggNOG" id="COG0190">
    <property type="taxonomic scope" value="Bacteria"/>
</dbReference>
<dbReference type="HOGENOM" id="CLU_034045_2_1_6"/>
<dbReference type="OrthoDB" id="9803580at2"/>
<dbReference type="UniPathway" id="UPA00193"/>
<dbReference type="Proteomes" id="UP000002383">
    <property type="component" value="Chromosome"/>
</dbReference>
<dbReference type="GO" id="GO:0005829">
    <property type="term" value="C:cytosol"/>
    <property type="evidence" value="ECO:0007669"/>
    <property type="project" value="TreeGrafter"/>
</dbReference>
<dbReference type="GO" id="GO:0004477">
    <property type="term" value="F:methenyltetrahydrofolate cyclohydrolase activity"/>
    <property type="evidence" value="ECO:0007669"/>
    <property type="project" value="UniProtKB-UniRule"/>
</dbReference>
<dbReference type="GO" id="GO:0004488">
    <property type="term" value="F:methylenetetrahydrofolate dehydrogenase (NADP+) activity"/>
    <property type="evidence" value="ECO:0007669"/>
    <property type="project" value="UniProtKB-UniRule"/>
</dbReference>
<dbReference type="GO" id="GO:0000105">
    <property type="term" value="P:L-histidine biosynthetic process"/>
    <property type="evidence" value="ECO:0007669"/>
    <property type="project" value="UniProtKB-KW"/>
</dbReference>
<dbReference type="GO" id="GO:0009086">
    <property type="term" value="P:methionine biosynthetic process"/>
    <property type="evidence" value="ECO:0007669"/>
    <property type="project" value="UniProtKB-KW"/>
</dbReference>
<dbReference type="GO" id="GO:0006164">
    <property type="term" value="P:purine nucleotide biosynthetic process"/>
    <property type="evidence" value="ECO:0007669"/>
    <property type="project" value="UniProtKB-KW"/>
</dbReference>
<dbReference type="GO" id="GO:0035999">
    <property type="term" value="P:tetrahydrofolate interconversion"/>
    <property type="evidence" value="ECO:0007669"/>
    <property type="project" value="UniProtKB-UniRule"/>
</dbReference>
<dbReference type="CDD" id="cd01080">
    <property type="entry name" value="NAD_bind_m-THF_DH_Cyclohyd"/>
    <property type="match status" value="1"/>
</dbReference>
<dbReference type="FunFam" id="3.40.50.10860:FF:000001">
    <property type="entry name" value="Bifunctional protein FolD"/>
    <property type="match status" value="1"/>
</dbReference>
<dbReference type="FunFam" id="3.40.50.720:FF:000006">
    <property type="entry name" value="Bifunctional protein FolD"/>
    <property type="match status" value="1"/>
</dbReference>
<dbReference type="Gene3D" id="3.40.50.10860">
    <property type="entry name" value="Leucine Dehydrogenase, chain A, domain 1"/>
    <property type="match status" value="1"/>
</dbReference>
<dbReference type="Gene3D" id="3.40.50.720">
    <property type="entry name" value="NAD(P)-binding Rossmann-like Domain"/>
    <property type="match status" value="1"/>
</dbReference>
<dbReference type="HAMAP" id="MF_01576">
    <property type="entry name" value="THF_DHG_CYH"/>
    <property type="match status" value="1"/>
</dbReference>
<dbReference type="InterPro" id="IPR046346">
    <property type="entry name" value="Aminoacid_DH-like_N_sf"/>
</dbReference>
<dbReference type="InterPro" id="IPR036291">
    <property type="entry name" value="NAD(P)-bd_dom_sf"/>
</dbReference>
<dbReference type="InterPro" id="IPR000672">
    <property type="entry name" value="THF_DH/CycHdrlase"/>
</dbReference>
<dbReference type="InterPro" id="IPR020630">
    <property type="entry name" value="THF_DH/CycHdrlase_cat_dom"/>
</dbReference>
<dbReference type="InterPro" id="IPR020867">
    <property type="entry name" value="THF_DH/CycHdrlase_CS"/>
</dbReference>
<dbReference type="InterPro" id="IPR020631">
    <property type="entry name" value="THF_DH/CycHdrlase_NAD-bd_dom"/>
</dbReference>
<dbReference type="NCBIfam" id="NF008058">
    <property type="entry name" value="PRK10792.1"/>
    <property type="match status" value="1"/>
</dbReference>
<dbReference type="NCBIfam" id="NF010783">
    <property type="entry name" value="PRK14186.1"/>
    <property type="match status" value="1"/>
</dbReference>
<dbReference type="PANTHER" id="PTHR48099:SF5">
    <property type="entry name" value="C-1-TETRAHYDROFOLATE SYNTHASE, CYTOPLASMIC"/>
    <property type="match status" value="1"/>
</dbReference>
<dbReference type="PANTHER" id="PTHR48099">
    <property type="entry name" value="C-1-TETRAHYDROFOLATE SYNTHASE, CYTOPLASMIC-RELATED"/>
    <property type="match status" value="1"/>
</dbReference>
<dbReference type="Pfam" id="PF00763">
    <property type="entry name" value="THF_DHG_CYH"/>
    <property type="match status" value="1"/>
</dbReference>
<dbReference type="Pfam" id="PF02882">
    <property type="entry name" value="THF_DHG_CYH_C"/>
    <property type="match status" value="1"/>
</dbReference>
<dbReference type="PRINTS" id="PR00085">
    <property type="entry name" value="THFDHDRGNASE"/>
</dbReference>
<dbReference type="SUPFAM" id="SSF53223">
    <property type="entry name" value="Aminoacid dehydrogenase-like, N-terminal domain"/>
    <property type="match status" value="1"/>
</dbReference>
<dbReference type="SUPFAM" id="SSF51735">
    <property type="entry name" value="NAD(P)-binding Rossmann-fold domains"/>
    <property type="match status" value="1"/>
</dbReference>
<dbReference type="PROSITE" id="PS00767">
    <property type="entry name" value="THF_DHG_CYH_2"/>
    <property type="match status" value="1"/>
</dbReference>
<protein>
    <recommendedName>
        <fullName evidence="1">Bifunctional protein FolD</fullName>
    </recommendedName>
    <domain>
        <recommendedName>
            <fullName evidence="1">Methylenetetrahydrofolate dehydrogenase</fullName>
            <ecNumber evidence="1">1.5.1.5</ecNumber>
        </recommendedName>
    </domain>
    <domain>
        <recommendedName>
            <fullName evidence="1">Methenyltetrahydrofolate cyclohydrolase</fullName>
            <ecNumber evidence="1">3.5.4.9</ecNumber>
        </recommendedName>
    </domain>
</protein>
<evidence type="ECO:0000255" key="1">
    <source>
        <dbReference type="HAMAP-Rule" id="MF_01576"/>
    </source>
</evidence>
<keyword id="KW-0028">Amino-acid biosynthesis</keyword>
<keyword id="KW-0368">Histidine biosynthesis</keyword>
<keyword id="KW-0378">Hydrolase</keyword>
<keyword id="KW-0486">Methionine biosynthesis</keyword>
<keyword id="KW-0511">Multifunctional enzyme</keyword>
<keyword id="KW-0521">NADP</keyword>
<keyword id="KW-0554">One-carbon metabolism</keyword>
<keyword id="KW-0560">Oxidoreductase</keyword>
<keyword id="KW-0658">Purine biosynthesis</keyword>
<keyword id="KW-1185">Reference proteome</keyword>
<sequence>MTARLIDGRQVAQQVHEEVRQAVERHTAQGRRAPGLAVVLVGENPASQVYVRNKRRTCEALGIESRSHDLPADTPQSVLLDLIDALNADPAVDGILVQLPLPAHFDTETVIERIDPAKDVDGFHPYNVGRLAVRLPTLRPCTPYGVMRLLDSTGEVYKGRNAVVVGASNIVGRPMALELMLAGATVTVCHRFTTDTAEHVARADIVVVAVGRPDLVPGEWIKPGATVIDVGMNRLEDGRLVGDVSFAAAAERAAWITPVPGGVGPMTVAMLMKNTIQSYESRLGR</sequence>
<accession>B8GNT6</accession>
<proteinExistence type="inferred from homology"/>
<reference key="1">
    <citation type="journal article" date="2011" name="Stand. Genomic Sci.">
        <title>Complete genome sequence of 'Thioalkalivibrio sulfidophilus' HL-EbGr7.</title>
        <authorList>
            <person name="Muyzer G."/>
            <person name="Sorokin D.Y."/>
            <person name="Mavromatis K."/>
            <person name="Lapidus A."/>
            <person name="Clum A."/>
            <person name="Ivanova N."/>
            <person name="Pati A."/>
            <person name="d'Haeseleer P."/>
            <person name="Woyke T."/>
            <person name="Kyrpides N.C."/>
        </authorList>
    </citation>
    <scope>NUCLEOTIDE SEQUENCE [LARGE SCALE GENOMIC DNA]</scope>
    <source>
        <strain>HL-EbGR7</strain>
    </source>
</reference>
<feature type="chain" id="PRO_1000185631" description="Bifunctional protein FolD">
    <location>
        <begin position="1"/>
        <end position="285"/>
    </location>
</feature>
<feature type="binding site" evidence="1">
    <location>
        <begin position="166"/>
        <end position="168"/>
    </location>
    <ligand>
        <name>NADP(+)</name>
        <dbReference type="ChEBI" id="CHEBI:58349"/>
    </ligand>
</feature>
<organism>
    <name type="scientific">Thioalkalivibrio sulfidiphilus (strain HL-EbGR7)</name>
    <dbReference type="NCBI Taxonomy" id="396588"/>
    <lineage>
        <taxon>Bacteria</taxon>
        <taxon>Pseudomonadati</taxon>
        <taxon>Pseudomonadota</taxon>
        <taxon>Gammaproteobacteria</taxon>
        <taxon>Chromatiales</taxon>
        <taxon>Ectothiorhodospiraceae</taxon>
        <taxon>Thioalkalivibrio</taxon>
    </lineage>
</organism>